<accession>B7NFY7</accession>
<gene>
    <name evidence="1" type="primary">lexA</name>
    <name type="ordered locus">ECUMN_4578</name>
</gene>
<proteinExistence type="inferred from homology"/>
<feature type="chain" id="PRO_1000192766" description="LexA repressor">
    <location>
        <begin position="1"/>
        <end position="202"/>
    </location>
</feature>
<feature type="DNA-binding region" description="H-T-H motif" evidence="1">
    <location>
        <begin position="28"/>
        <end position="48"/>
    </location>
</feature>
<feature type="active site" description="For autocatalytic cleavage activity" evidence="1">
    <location>
        <position position="119"/>
    </location>
</feature>
<feature type="active site" description="For autocatalytic cleavage activity" evidence="1">
    <location>
        <position position="156"/>
    </location>
</feature>
<feature type="site" description="Cleavage; by autolysis" evidence="1">
    <location>
        <begin position="84"/>
        <end position="85"/>
    </location>
</feature>
<keyword id="KW-0068">Autocatalytic cleavage</keyword>
<keyword id="KW-0227">DNA damage</keyword>
<keyword id="KW-0234">DNA repair</keyword>
<keyword id="KW-0235">DNA replication</keyword>
<keyword id="KW-0238">DNA-binding</keyword>
<keyword id="KW-0378">Hydrolase</keyword>
<keyword id="KW-0678">Repressor</keyword>
<keyword id="KW-0742">SOS response</keyword>
<keyword id="KW-0804">Transcription</keyword>
<keyword id="KW-0805">Transcription regulation</keyword>
<reference key="1">
    <citation type="journal article" date="2009" name="PLoS Genet.">
        <title>Organised genome dynamics in the Escherichia coli species results in highly diverse adaptive paths.</title>
        <authorList>
            <person name="Touchon M."/>
            <person name="Hoede C."/>
            <person name="Tenaillon O."/>
            <person name="Barbe V."/>
            <person name="Baeriswyl S."/>
            <person name="Bidet P."/>
            <person name="Bingen E."/>
            <person name="Bonacorsi S."/>
            <person name="Bouchier C."/>
            <person name="Bouvet O."/>
            <person name="Calteau A."/>
            <person name="Chiapello H."/>
            <person name="Clermont O."/>
            <person name="Cruveiller S."/>
            <person name="Danchin A."/>
            <person name="Diard M."/>
            <person name="Dossat C."/>
            <person name="Karoui M.E."/>
            <person name="Frapy E."/>
            <person name="Garry L."/>
            <person name="Ghigo J.M."/>
            <person name="Gilles A.M."/>
            <person name="Johnson J."/>
            <person name="Le Bouguenec C."/>
            <person name="Lescat M."/>
            <person name="Mangenot S."/>
            <person name="Martinez-Jehanne V."/>
            <person name="Matic I."/>
            <person name="Nassif X."/>
            <person name="Oztas S."/>
            <person name="Petit M.A."/>
            <person name="Pichon C."/>
            <person name="Rouy Z."/>
            <person name="Ruf C.S."/>
            <person name="Schneider D."/>
            <person name="Tourret J."/>
            <person name="Vacherie B."/>
            <person name="Vallenet D."/>
            <person name="Medigue C."/>
            <person name="Rocha E.P.C."/>
            <person name="Denamur E."/>
        </authorList>
    </citation>
    <scope>NUCLEOTIDE SEQUENCE [LARGE SCALE GENOMIC DNA]</scope>
    <source>
        <strain>UMN026 / ExPEC</strain>
    </source>
</reference>
<name>LEXA_ECOLU</name>
<comment type="function">
    <text evidence="1">Represses a number of genes involved in the response to DNA damage (SOS response), including recA and lexA. Binds to the 16 bp palindromic sequence 5'-CTGTATATATATACAG-3'. In the presence of single-stranded DNA, RecA interacts with LexA causing an autocatalytic cleavage which disrupts the DNA-binding part of LexA, leading to derepression of the SOS regulon and eventually DNA repair.</text>
</comment>
<comment type="catalytic activity">
    <reaction evidence="1">
        <text>Hydrolysis of Ala-|-Gly bond in repressor LexA.</text>
        <dbReference type="EC" id="3.4.21.88"/>
    </reaction>
</comment>
<comment type="subunit">
    <text evidence="1">Homodimer.</text>
</comment>
<comment type="similarity">
    <text evidence="1">Belongs to the peptidase S24 family.</text>
</comment>
<protein>
    <recommendedName>
        <fullName evidence="1">LexA repressor</fullName>
        <ecNumber evidence="1">3.4.21.88</ecNumber>
    </recommendedName>
</protein>
<evidence type="ECO:0000255" key="1">
    <source>
        <dbReference type="HAMAP-Rule" id="MF_00015"/>
    </source>
</evidence>
<organism>
    <name type="scientific">Escherichia coli O17:K52:H18 (strain UMN026 / ExPEC)</name>
    <dbReference type="NCBI Taxonomy" id="585056"/>
    <lineage>
        <taxon>Bacteria</taxon>
        <taxon>Pseudomonadati</taxon>
        <taxon>Pseudomonadota</taxon>
        <taxon>Gammaproteobacteria</taxon>
        <taxon>Enterobacterales</taxon>
        <taxon>Enterobacteriaceae</taxon>
        <taxon>Escherichia</taxon>
    </lineage>
</organism>
<dbReference type="EC" id="3.4.21.88" evidence="1"/>
<dbReference type="EMBL" id="CU928163">
    <property type="protein sequence ID" value="CAR15695.1"/>
    <property type="molecule type" value="Genomic_DNA"/>
</dbReference>
<dbReference type="RefSeq" id="WP_000646078.1">
    <property type="nucleotide sequence ID" value="NC_011751.1"/>
</dbReference>
<dbReference type="RefSeq" id="YP_002415184.1">
    <property type="nucleotide sequence ID" value="NC_011751.1"/>
</dbReference>
<dbReference type="SMR" id="B7NFY7"/>
<dbReference type="STRING" id="585056.ECUMN_4578"/>
<dbReference type="MEROPS" id="S24.001"/>
<dbReference type="GeneID" id="93777788"/>
<dbReference type="KEGG" id="eum:ECUMN_4578"/>
<dbReference type="PATRIC" id="fig|585056.7.peg.4740"/>
<dbReference type="HOGENOM" id="CLU_066192_45_3_6"/>
<dbReference type="Proteomes" id="UP000007097">
    <property type="component" value="Chromosome"/>
</dbReference>
<dbReference type="GO" id="GO:0003677">
    <property type="term" value="F:DNA binding"/>
    <property type="evidence" value="ECO:0007669"/>
    <property type="project" value="UniProtKB-UniRule"/>
</dbReference>
<dbReference type="GO" id="GO:0004252">
    <property type="term" value="F:serine-type endopeptidase activity"/>
    <property type="evidence" value="ECO:0007669"/>
    <property type="project" value="UniProtKB-UniRule"/>
</dbReference>
<dbReference type="GO" id="GO:0006281">
    <property type="term" value="P:DNA repair"/>
    <property type="evidence" value="ECO:0007669"/>
    <property type="project" value="UniProtKB-UniRule"/>
</dbReference>
<dbReference type="GO" id="GO:0006260">
    <property type="term" value="P:DNA replication"/>
    <property type="evidence" value="ECO:0007669"/>
    <property type="project" value="UniProtKB-UniRule"/>
</dbReference>
<dbReference type="GO" id="GO:0045892">
    <property type="term" value="P:negative regulation of DNA-templated transcription"/>
    <property type="evidence" value="ECO:0007669"/>
    <property type="project" value="UniProtKB-UniRule"/>
</dbReference>
<dbReference type="GO" id="GO:0006508">
    <property type="term" value="P:proteolysis"/>
    <property type="evidence" value="ECO:0007669"/>
    <property type="project" value="InterPro"/>
</dbReference>
<dbReference type="GO" id="GO:0009432">
    <property type="term" value="P:SOS response"/>
    <property type="evidence" value="ECO:0007669"/>
    <property type="project" value="UniProtKB-UniRule"/>
</dbReference>
<dbReference type="CDD" id="cd06529">
    <property type="entry name" value="S24_LexA-like"/>
    <property type="match status" value="1"/>
</dbReference>
<dbReference type="FunFam" id="1.10.10.10:FF:000009">
    <property type="entry name" value="LexA repressor"/>
    <property type="match status" value="1"/>
</dbReference>
<dbReference type="FunFam" id="2.10.109.10:FF:000001">
    <property type="entry name" value="LexA repressor"/>
    <property type="match status" value="1"/>
</dbReference>
<dbReference type="Gene3D" id="2.10.109.10">
    <property type="entry name" value="Umud Fragment, subunit A"/>
    <property type="match status" value="1"/>
</dbReference>
<dbReference type="Gene3D" id="1.10.10.10">
    <property type="entry name" value="Winged helix-like DNA-binding domain superfamily/Winged helix DNA-binding domain"/>
    <property type="match status" value="1"/>
</dbReference>
<dbReference type="HAMAP" id="MF_00015">
    <property type="entry name" value="LexA"/>
    <property type="match status" value="1"/>
</dbReference>
<dbReference type="InterPro" id="IPR006200">
    <property type="entry name" value="LexA"/>
</dbReference>
<dbReference type="InterPro" id="IPR039418">
    <property type="entry name" value="LexA-like"/>
</dbReference>
<dbReference type="InterPro" id="IPR036286">
    <property type="entry name" value="LexA/Signal_pep-like_sf"/>
</dbReference>
<dbReference type="InterPro" id="IPR006199">
    <property type="entry name" value="LexA_DNA-bd_dom"/>
</dbReference>
<dbReference type="InterPro" id="IPR050077">
    <property type="entry name" value="LexA_repressor"/>
</dbReference>
<dbReference type="InterPro" id="IPR006197">
    <property type="entry name" value="Peptidase_S24_LexA"/>
</dbReference>
<dbReference type="InterPro" id="IPR015927">
    <property type="entry name" value="Peptidase_S24_S26A/B/C"/>
</dbReference>
<dbReference type="InterPro" id="IPR036388">
    <property type="entry name" value="WH-like_DNA-bd_sf"/>
</dbReference>
<dbReference type="InterPro" id="IPR036390">
    <property type="entry name" value="WH_DNA-bd_sf"/>
</dbReference>
<dbReference type="NCBIfam" id="TIGR00498">
    <property type="entry name" value="lexA"/>
    <property type="match status" value="1"/>
</dbReference>
<dbReference type="PANTHER" id="PTHR33516">
    <property type="entry name" value="LEXA REPRESSOR"/>
    <property type="match status" value="1"/>
</dbReference>
<dbReference type="PANTHER" id="PTHR33516:SF2">
    <property type="entry name" value="LEXA REPRESSOR-RELATED"/>
    <property type="match status" value="1"/>
</dbReference>
<dbReference type="Pfam" id="PF01726">
    <property type="entry name" value="LexA_DNA_bind"/>
    <property type="match status" value="1"/>
</dbReference>
<dbReference type="Pfam" id="PF00717">
    <property type="entry name" value="Peptidase_S24"/>
    <property type="match status" value="1"/>
</dbReference>
<dbReference type="PRINTS" id="PR00726">
    <property type="entry name" value="LEXASERPTASE"/>
</dbReference>
<dbReference type="SUPFAM" id="SSF51306">
    <property type="entry name" value="LexA/Signal peptidase"/>
    <property type="match status" value="1"/>
</dbReference>
<dbReference type="SUPFAM" id="SSF46785">
    <property type="entry name" value="Winged helix' DNA-binding domain"/>
    <property type="match status" value="1"/>
</dbReference>
<sequence length="202" mass="22358">MKALTARQQEVFDLIRDHISQTGMPPTRAEIAQRLGFRSPNAAEEHLKALARKGVIEIVSGASRGIRLLQEEEEGLPLVGRVAAGEPLLAQQHIEGHYQVDPSLFKPNADFLLRVSGMSMKDIGIMDGDLLAVHKTQDVRNGQVVVARIDDEVTVKRLKKQGNKVELLPENSEFKPIVVDLRQQSFTIEGLAVGVIRNGDWL</sequence>